<proteinExistence type="evidence at transcript level"/>
<reference evidence="18" key="1">
    <citation type="journal article" date="2000" name="Plant Sci.">
        <title>Puroindoline genes are highly conserved in diploid ancestor wheats and related species but absent in tetraploid Triticum species.</title>
        <authorList>
            <person name="Gautier M.-F."/>
            <person name="Cosson P."/>
            <person name="Guirao A."/>
            <person name="Alary R."/>
            <person name="Joudrier P."/>
        </authorList>
    </citation>
    <scope>NUCLEOTIDE SEQUENCE [GENOMIC DNA]</scope>
    <source>
        <tissue evidence="18">Leaf</tissue>
    </source>
</reference>
<reference evidence="7 8" key="2">
    <citation type="submission" date="2002-06" db="EMBL/GenBank/DDBJ databases">
        <title>Identification of new barley hordoindoline alleles.</title>
        <authorList>
            <person name="Darlington Y.F."/>
            <person name="Giroux M.J."/>
            <person name="Shan X."/>
        </authorList>
    </citation>
    <scope>NUCLEOTIDE SEQUENCE [GENOMIC DNA] OF 8-149</scope>
    <scope>VARIANTS VAL-9; LYS-29; GLU-43; ARG-71; LYS-78; LEU-78; GLY-89; GLU-102; PRO-105 AND VAL-111</scope>
</reference>
<reference evidence="7 8" key="3">
    <citation type="submission" date="2006-07" db="EMBL/GenBank/DDBJ databases">
        <title>The variation of hardness locus and endosperm texture in spring cultivars of barley (Hordeum vulgare L.).</title>
        <authorList>
            <person name="Turuspekov Y."/>
            <person name="Beecher B."/>
            <person name="Darlington Y.F."/>
            <person name="Bowman J."/>
            <person name="Blake T.K."/>
            <person name="Giroux M.J."/>
        </authorList>
    </citation>
    <scope>NUCLEOTIDE SEQUENCE [GENOMIC DNA] OF 8-149</scope>
    <scope>VARIANTS VAL-9; LYS-29; GLU-43; ARG-71; LYS-78; LEU-78; GLY-89; GLU-102; PRO-105 AND VAL-111</scope>
    <source>
        <strain evidence="12">cv. Baronesse</strain>
        <strain evidence="15">cv. Chinook</strain>
        <strain evidence="13">cv. Harrington</strain>
        <strain evidence="9">cv. Landrace</strain>
        <strain evidence="14">cv. Lewis</strain>
        <strain evidence="11">cv. Medallion</strain>
        <strain evidence="17">cv. Merlin</strain>
        <strain evidence="16">cv. Morex</strain>
        <strain evidence="10">cv. Steptoe</strain>
    </source>
</reference>
<reference evidence="7" key="4">
    <citation type="journal article" date="2001" name="Plant Mol. Biol.">
        <title>Identification and molecular characterisation of hordoindolines from barley grain.</title>
        <authorList>
            <person name="Darlington H.F."/>
            <person name="Rouster J."/>
            <person name="Hoffmann L."/>
            <person name="Halford N.G."/>
            <person name="Shewry P.R."/>
            <person name="Simpson D.J."/>
        </authorList>
    </citation>
    <scope>TISSUE SPECIFICITY</scope>
</reference>
<reference evidence="7" key="5">
    <citation type="journal article" date="2002" name="Genome">
        <title>Hordoindolines are associated with a major endosperm-texture QTL in barley (Hordeum vulgare).</title>
        <authorList>
            <person name="Beecher B."/>
            <person name="Bowman J."/>
            <person name="Martin J.M."/>
            <person name="Bettge A.D."/>
            <person name="Morris C.F."/>
            <person name="Blake T.K."/>
            <person name="Giroux M.J."/>
        </authorList>
    </citation>
    <scope>FUNCTION</scope>
</reference>
<comment type="function">
    <text evidence="1 4">Acts as a membranotoxin, probably through its antibacterial and antifungal activities, contributing to the defense mechanism of the plant against predators. Forms monovalent cation-selective ion channels in membranes (By similarity). Contributes to grain texture and hardness.</text>
</comment>
<comment type="subcellular location">
    <subcellularLocation>
        <location evidence="1">Membrane</location>
    </subcellularLocation>
    <subcellularLocation>
        <location evidence="1">Secreted</location>
        <location evidence="1">Extracellular space</location>
    </subcellularLocation>
</comment>
<comment type="tissue specificity">
    <text evidence="3">Found in endosperm and aleurone layer of developing kernels, but not in the embryo.</text>
</comment>
<comment type="PTM">
    <text evidence="1">Five disulfide bonds are present.</text>
</comment>
<accession>Q9M4E3</accession>
<accession>Q0GJB4</accession>
<accession>Q0GJD7</accession>
<accession>Q0GJH0</accession>
<accession>Q0GJH1</accession>
<accession>Q8L567</accession>
<accession>Q8LK44</accession>
<accession>Q8LK45</accession>
<accession>Q8LK46</accession>
<accession>Q8LSC9</accession>
<accession>Q8LSD0</accession>
<accession>Q8LSD1</accession>
<accession>Q8LSD2</accession>
<accession>Q8LSD3</accession>
<accession>Q8LSD4</accession>
<protein>
    <recommendedName>
        <fullName>Hordoindoline-A</fullName>
    </recommendedName>
</protein>
<name>HINA_HORVU</name>
<evidence type="ECO:0000250" key="1">
    <source>
        <dbReference type="UniProtKB" id="P33432"/>
    </source>
</evidence>
<evidence type="ECO:0000255" key="2"/>
<evidence type="ECO:0000269" key="3">
    <source>
    </source>
</evidence>
<evidence type="ECO:0000269" key="4">
    <source>
    </source>
</evidence>
<evidence type="ECO:0000269" key="5">
    <source ref="2"/>
</evidence>
<evidence type="ECO:0000269" key="6">
    <source ref="3"/>
</evidence>
<evidence type="ECO:0000305" key="7"/>
<evidence type="ECO:0000312" key="8">
    <source>
        <dbReference type="EMBL" id="AAM82592.1"/>
    </source>
</evidence>
<evidence type="ECO:0000312" key="9">
    <source>
        <dbReference type="EMBL" id="ABI18654.1"/>
    </source>
</evidence>
<evidence type="ECO:0000312" key="10">
    <source>
        <dbReference type="EMBL" id="ABI18715.1"/>
    </source>
</evidence>
<evidence type="ECO:0000312" key="11">
    <source>
        <dbReference type="EMBL" id="ABI18716.1"/>
    </source>
</evidence>
<evidence type="ECO:0000312" key="12">
    <source>
        <dbReference type="EMBL" id="ABI18717.1"/>
    </source>
</evidence>
<evidence type="ECO:0000312" key="13">
    <source>
        <dbReference type="EMBL" id="ABI18718.1"/>
    </source>
</evidence>
<evidence type="ECO:0000312" key="14">
    <source>
        <dbReference type="EMBL" id="ABI18719.1"/>
    </source>
</evidence>
<evidence type="ECO:0000312" key="15">
    <source>
        <dbReference type="EMBL" id="ABI18720.1"/>
    </source>
</evidence>
<evidence type="ECO:0000312" key="16">
    <source>
        <dbReference type="EMBL" id="ABI18721.1"/>
    </source>
</evidence>
<evidence type="ECO:0000312" key="17">
    <source>
        <dbReference type="EMBL" id="ABI18722.1"/>
    </source>
</evidence>
<evidence type="ECO:0000312" key="18">
    <source>
        <dbReference type="EMBL" id="CAB89519.1"/>
    </source>
</evidence>
<sequence length="149" mass="16494">MKALFLMGLLALVASAAFAQYGEVVGSYEGGAGGGGAQQCPLGTKLDSCRNYLLDRCTTMKDFPVTWRWWTWWKGGCEELLHDCCSQLSQMPPQCRCNIIQGSIQRDLGGFFGFQRDRTVKVIQAAKNLPPRCNQGPACNIPSTIGYYW</sequence>
<feature type="signal peptide" evidence="2">
    <location>
        <begin position="1"/>
        <end position="19"/>
    </location>
</feature>
<feature type="propeptide" id="PRO_0000309561" evidence="1">
    <location>
        <begin position="20"/>
        <end position="28"/>
    </location>
</feature>
<feature type="chain" id="PRO_5000065690" description="Hordoindoline-A" evidence="1">
    <location>
        <begin position="29"/>
        <end position="147"/>
    </location>
</feature>
<feature type="propeptide" id="PRO_0000309562" description="Removed in mature form" evidence="1">
    <location>
        <begin position="148"/>
        <end position="149"/>
    </location>
</feature>
<feature type="sequence variant" evidence="5 6">
    <original>L</original>
    <variation>V</variation>
    <location>
        <position position="9"/>
    </location>
</feature>
<feature type="sequence variant" evidence="5 6">
    <original>E</original>
    <variation>K</variation>
    <location>
        <position position="29"/>
    </location>
</feature>
<feature type="sequence variant" evidence="5 6">
    <original>G</original>
    <variation>E</variation>
    <location>
        <position position="43"/>
    </location>
</feature>
<feature type="sequence variant" evidence="5 6">
    <original>T</original>
    <variation>R</variation>
    <location>
        <position position="71"/>
    </location>
</feature>
<feature type="sequence variant" evidence="5 6">
    <original>E</original>
    <variation>K</variation>
    <location>
        <position position="78"/>
    </location>
</feature>
<feature type="sequence variant" evidence="5 6">
    <original>E</original>
    <variation>L</variation>
    <location>
        <position position="78"/>
    </location>
</feature>
<feature type="sequence variant" evidence="5 6">
    <original>S</original>
    <variation>G</variation>
    <location>
        <position position="89"/>
    </location>
</feature>
<feature type="sequence variant" evidence="5 6">
    <original>G</original>
    <variation>E</variation>
    <location>
        <position position="102"/>
    </location>
</feature>
<feature type="sequence variant" evidence="5 6">
    <original>Q</original>
    <variation>P</variation>
    <location>
        <position position="105"/>
    </location>
</feature>
<feature type="sequence variant" evidence="5 6">
    <original>F</original>
    <variation>V</variation>
    <location>
        <position position="111"/>
    </location>
</feature>
<dbReference type="EMBL" id="AJ249929">
    <property type="protein sequence ID" value="CAB89519.1"/>
    <property type="molecule type" value="Genomic_DNA"/>
</dbReference>
<dbReference type="EMBL" id="AF473870">
    <property type="protein sequence ID" value="AAM21044.1"/>
    <property type="molecule type" value="Genomic_DNA"/>
</dbReference>
<dbReference type="EMBL" id="AF473871">
    <property type="protein sequence ID" value="AAM21045.1"/>
    <property type="molecule type" value="Genomic_DNA"/>
</dbReference>
<dbReference type="EMBL" id="AF473872">
    <property type="protein sequence ID" value="AAM21046.1"/>
    <property type="molecule type" value="Genomic_DNA"/>
</dbReference>
<dbReference type="EMBL" id="AF473873">
    <property type="protein sequence ID" value="AAM21047.1"/>
    <property type="molecule type" value="Genomic_DNA"/>
</dbReference>
<dbReference type="EMBL" id="AF473874">
    <property type="protein sequence ID" value="AAM21048.1"/>
    <property type="molecule type" value="Genomic_DNA"/>
</dbReference>
<dbReference type="EMBL" id="AF473875">
    <property type="protein sequence ID" value="AAM21049.1"/>
    <property type="molecule type" value="Genomic_DNA"/>
</dbReference>
<dbReference type="EMBL" id="AF525034">
    <property type="protein sequence ID" value="AAM82592.1"/>
    <property type="molecule type" value="Genomic_DNA"/>
</dbReference>
<dbReference type="EMBL" id="AF525035">
    <property type="protein sequence ID" value="AAM82593.1"/>
    <property type="molecule type" value="Genomic_DNA"/>
</dbReference>
<dbReference type="EMBL" id="AF525036">
    <property type="protein sequence ID" value="AAM82594.1"/>
    <property type="molecule type" value="Genomic_DNA"/>
</dbReference>
<dbReference type="EMBL" id="AF525037">
    <property type="protein sequence ID" value="AAM82595.1"/>
    <property type="molecule type" value="Genomic_DNA"/>
</dbReference>
<dbReference type="EMBL" id="AF525038">
    <property type="protein sequence ID" value="AAM82596.1"/>
    <property type="molecule type" value="Genomic_DNA"/>
</dbReference>
<dbReference type="EMBL" id="DQ862133">
    <property type="protein sequence ID" value="ABI18642.1"/>
    <property type="molecule type" value="Genomic_DNA"/>
</dbReference>
<dbReference type="EMBL" id="DQ862134">
    <property type="protein sequence ID" value="ABI18643.1"/>
    <property type="molecule type" value="Genomic_DNA"/>
</dbReference>
<dbReference type="EMBL" id="DQ862135">
    <property type="protein sequence ID" value="ABI18644.1"/>
    <property type="molecule type" value="Genomic_DNA"/>
</dbReference>
<dbReference type="EMBL" id="DQ862136">
    <property type="protein sequence ID" value="ABI18645.1"/>
    <property type="molecule type" value="Genomic_DNA"/>
</dbReference>
<dbReference type="EMBL" id="DQ862137">
    <property type="protein sequence ID" value="ABI18646.1"/>
    <property type="molecule type" value="Genomic_DNA"/>
</dbReference>
<dbReference type="EMBL" id="DQ862138">
    <property type="protein sequence ID" value="ABI18647.1"/>
    <property type="molecule type" value="Genomic_DNA"/>
</dbReference>
<dbReference type="EMBL" id="DQ862139">
    <property type="protein sequence ID" value="ABI18648.1"/>
    <property type="molecule type" value="Genomic_DNA"/>
</dbReference>
<dbReference type="EMBL" id="DQ862140">
    <property type="protein sequence ID" value="ABI18649.1"/>
    <property type="molecule type" value="Genomic_DNA"/>
</dbReference>
<dbReference type="EMBL" id="DQ862141">
    <property type="protein sequence ID" value="ABI18650.1"/>
    <property type="molecule type" value="Genomic_DNA"/>
</dbReference>
<dbReference type="EMBL" id="DQ862142">
    <property type="protein sequence ID" value="ABI18651.1"/>
    <property type="molecule type" value="Genomic_DNA"/>
</dbReference>
<dbReference type="EMBL" id="DQ862143">
    <property type="protein sequence ID" value="ABI18652.1"/>
    <property type="molecule type" value="Genomic_DNA"/>
</dbReference>
<dbReference type="EMBL" id="DQ862144">
    <property type="protein sequence ID" value="ABI18653.1"/>
    <property type="molecule type" value="Genomic_DNA"/>
</dbReference>
<dbReference type="EMBL" id="DQ862145">
    <property type="protein sequence ID" value="ABI18654.1"/>
    <property type="molecule type" value="Genomic_DNA"/>
</dbReference>
<dbReference type="EMBL" id="DQ862146">
    <property type="protein sequence ID" value="ABI18655.1"/>
    <property type="molecule type" value="Genomic_DNA"/>
</dbReference>
<dbReference type="EMBL" id="DQ862147">
    <property type="protein sequence ID" value="ABI18656.1"/>
    <property type="molecule type" value="Genomic_DNA"/>
</dbReference>
<dbReference type="EMBL" id="DQ862148">
    <property type="protein sequence ID" value="ABI18657.1"/>
    <property type="molecule type" value="Genomic_DNA"/>
</dbReference>
<dbReference type="EMBL" id="DQ862149">
    <property type="protein sequence ID" value="ABI18658.1"/>
    <property type="molecule type" value="Genomic_DNA"/>
</dbReference>
<dbReference type="EMBL" id="DQ862150">
    <property type="protein sequence ID" value="ABI18659.1"/>
    <property type="molecule type" value="Genomic_DNA"/>
</dbReference>
<dbReference type="EMBL" id="DQ862151">
    <property type="protein sequence ID" value="ABI18660.1"/>
    <property type="molecule type" value="Genomic_DNA"/>
</dbReference>
<dbReference type="EMBL" id="DQ862152">
    <property type="protein sequence ID" value="ABI18661.1"/>
    <property type="molecule type" value="Genomic_DNA"/>
</dbReference>
<dbReference type="EMBL" id="DQ862153">
    <property type="protein sequence ID" value="ABI18662.1"/>
    <property type="molecule type" value="Genomic_DNA"/>
</dbReference>
<dbReference type="EMBL" id="DQ862154">
    <property type="protein sequence ID" value="ABI18663.1"/>
    <property type="molecule type" value="Genomic_DNA"/>
</dbReference>
<dbReference type="EMBL" id="DQ862155">
    <property type="protein sequence ID" value="ABI18664.1"/>
    <property type="molecule type" value="Genomic_DNA"/>
</dbReference>
<dbReference type="EMBL" id="DQ862156">
    <property type="protein sequence ID" value="ABI18665.1"/>
    <property type="molecule type" value="Genomic_DNA"/>
</dbReference>
<dbReference type="EMBL" id="DQ862157">
    <property type="protein sequence ID" value="ABI18666.1"/>
    <property type="molecule type" value="Genomic_DNA"/>
</dbReference>
<dbReference type="EMBL" id="DQ862158">
    <property type="protein sequence ID" value="ABI18667.1"/>
    <property type="molecule type" value="Genomic_DNA"/>
</dbReference>
<dbReference type="EMBL" id="DQ862159">
    <property type="protein sequence ID" value="ABI18668.1"/>
    <property type="molecule type" value="Genomic_DNA"/>
</dbReference>
<dbReference type="EMBL" id="DQ862160">
    <property type="protein sequence ID" value="ABI18669.1"/>
    <property type="molecule type" value="Genomic_DNA"/>
</dbReference>
<dbReference type="EMBL" id="DQ862161">
    <property type="protein sequence ID" value="ABI18670.1"/>
    <property type="molecule type" value="Genomic_DNA"/>
</dbReference>
<dbReference type="EMBL" id="DQ862162">
    <property type="protein sequence ID" value="ABI18671.1"/>
    <property type="molecule type" value="Genomic_DNA"/>
</dbReference>
<dbReference type="EMBL" id="DQ862163">
    <property type="protein sequence ID" value="ABI18672.1"/>
    <property type="molecule type" value="Genomic_DNA"/>
</dbReference>
<dbReference type="EMBL" id="DQ862164">
    <property type="protein sequence ID" value="ABI18673.1"/>
    <property type="molecule type" value="Genomic_DNA"/>
</dbReference>
<dbReference type="EMBL" id="DQ862165">
    <property type="protein sequence ID" value="ABI18674.1"/>
    <property type="molecule type" value="Genomic_DNA"/>
</dbReference>
<dbReference type="EMBL" id="DQ862166">
    <property type="protein sequence ID" value="ABI18675.1"/>
    <property type="molecule type" value="Genomic_DNA"/>
</dbReference>
<dbReference type="EMBL" id="DQ862167">
    <property type="protein sequence ID" value="ABI18676.1"/>
    <property type="molecule type" value="Genomic_DNA"/>
</dbReference>
<dbReference type="EMBL" id="DQ862168">
    <property type="protein sequence ID" value="ABI18677.1"/>
    <property type="molecule type" value="Genomic_DNA"/>
</dbReference>
<dbReference type="EMBL" id="DQ862169">
    <property type="protein sequence ID" value="ABI18678.1"/>
    <property type="molecule type" value="Genomic_DNA"/>
</dbReference>
<dbReference type="EMBL" id="DQ862170">
    <property type="protein sequence ID" value="ABI18679.1"/>
    <property type="molecule type" value="Genomic_DNA"/>
</dbReference>
<dbReference type="EMBL" id="DQ862171">
    <property type="protein sequence ID" value="ABI18680.1"/>
    <property type="molecule type" value="Genomic_DNA"/>
</dbReference>
<dbReference type="EMBL" id="DQ862172">
    <property type="protein sequence ID" value="ABI18681.1"/>
    <property type="molecule type" value="Genomic_DNA"/>
</dbReference>
<dbReference type="EMBL" id="DQ862173">
    <property type="protein sequence ID" value="ABI18682.1"/>
    <property type="molecule type" value="Genomic_DNA"/>
</dbReference>
<dbReference type="EMBL" id="DQ862174">
    <property type="protein sequence ID" value="ABI18683.1"/>
    <property type="molecule type" value="Genomic_DNA"/>
</dbReference>
<dbReference type="EMBL" id="DQ862175">
    <property type="protein sequence ID" value="ABI18684.1"/>
    <property type="molecule type" value="Genomic_DNA"/>
</dbReference>
<dbReference type="EMBL" id="DQ862176">
    <property type="protein sequence ID" value="ABI18685.1"/>
    <property type="molecule type" value="Genomic_DNA"/>
</dbReference>
<dbReference type="EMBL" id="DQ862177">
    <property type="protein sequence ID" value="ABI18686.1"/>
    <property type="molecule type" value="Genomic_DNA"/>
</dbReference>
<dbReference type="EMBL" id="DQ862178">
    <property type="protein sequence ID" value="ABI18687.1"/>
    <property type="molecule type" value="Genomic_DNA"/>
</dbReference>
<dbReference type="EMBL" id="DQ862179">
    <property type="protein sequence ID" value="ABI18688.1"/>
    <property type="molecule type" value="Genomic_DNA"/>
</dbReference>
<dbReference type="EMBL" id="DQ862180">
    <property type="protein sequence ID" value="ABI18689.1"/>
    <property type="molecule type" value="Genomic_DNA"/>
</dbReference>
<dbReference type="EMBL" id="DQ862181">
    <property type="protein sequence ID" value="ABI18690.1"/>
    <property type="molecule type" value="Genomic_DNA"/>
</dbReference>
<dbReference type="EMBL" id="DQ862182">
    <property type="protein sequence ID" value="ABI18691.1"/>
    <property type="molecule type" value="Genomic_DNA"/>
</dbReference>
<dbReference type="EMBL" id="DQ862183">
    <property type="protein sequence ID" value="ABI18692.1"/>
    <property type="molecule type" value="Genomic_DNA"/>
</dbReference>
<dbReference type="EMBL" id="DQ862184">
    <property type="protein sequence ID" value="ABI18693.1"/>
    <property type="molecule type" value="Genomic_DNA"/>
</dbReference>
<dbReference type="EMBL" id="DQ862185">
    <property type="protein sequence ID" value="ABI18694.1"/>
    <property type="molecule type" value="Genomic_DNA"/>
</dbReference>
<dbReference type="EMBL" id="DQ862186">
    <property type="protein sequence ID" value="ABI18695.1"/>
    <property type="molecule type" value="Genomic_DNA"/>
</dbReference>
<dbReference type="EMBL" id="DQ862187">
    <property type="protein sequence ID" value="ABI18696.1"/>
    <property type="molecule type" value="Genomic_DNA"/>
</dbReference>
<dbReference type="EMBL" id="DQ862188">
    <property type="protein sequence ID" value="ABI18697.1"/>
    <property type="molecule type" value="Genomic_DNA"/>
</dbReference>
<dbReference type="EMBL" id="DQ862189">
    <property type="protein sequence ID" value="ABI18698.1"/>
    <property type="molecule type" value="Genomic_DNA"/>
</dbReference>
<dbReference type="EMBL" id="DQ862190">
    <property type="protein sequence ID" value="ABI18699.1"/>
    <property type="molecule type" value="Genomic_DNA"/>
</dbReference>
<dbReference type="EMBL" id="DQ862191">
    <property type="protein sequence ID" value="ABI18700.1"/>
    <property type="molecule type" value="Genomic_DNA"/>
</dbReference>
<dbReference type="EMBL" id="DQ862192">
    <property type="protein sequence ID" value="ABI18701.1"/>
    <property type="molecule type" value="Genomic_DNA"/>
</dbReference>
<dbReference type="EMBL" id="DQ862193">
    <property type="protein sequence ID" value="ABI18702.1"/>
    <property type="molecule type" value="Genomic_DNA"/>
</dbReference>
<dbReference type="EMBL" id="DQ862194">
    <property type="protein sequence ID" value="ABI18703.1"/>
    <property type="molecule type" value="Genomic_DNA"/>
</dbReference>
<dbReference type="EMBL" id="DQ862195">
    <property type="protein sequence ID" value="ABI18704.1"/>
    <property type="molecule type" value="Genomic_DNA"/>
</dbReference>
<dbReference type="EMBL" id="DQ862196">
    <property type="protein sequence ID" value="ABI18705.1"/>
    <property type="molecule type" value="Genomic_DNA"/>
</dbReference>
<dbReference type="EMBL" id="DQ862197">
    <property type="protein sequence ID" value="ABI18706.1"/>
    <property type="molecule type" value="Genomic_DNA"/>
</dbReference>
<dbReference type="EMBL" id="DQ862198">
    <property type="protein sequence ID" value="ABI18707.1"/>
    <property type="molecule type" value="Genomic_DNA"/>
</dbReference>
<dbReference type="EMBL" id="DQ862199">
    <property type="protein sequence ID" value="ABI18708.1"/>
    <property type="molecule type" value="Genomic_DNA"/>
</dbReference>
<dbReference type="EMBL" id="DQ862200">
    <property type="protein sequence ID" value="ABI18709.1"/>
    <property type="molecule type" value="Genomic_DNA"/>
</dbReference>
<dbReference type="EMBL" id="DQ862201">
    <property type="protein sequence ID" value="ABI18710.1"/>
    <property type="molecule type" value="Genomic_DNA"/>
</dbReference>
<dbReference type="EMBL" id="DQ862202">
    <property type="protein sequence ID" value="ABI18711.1"/>
    <property type="molecule type" value="Genomic_DNA"/>
</dbReference>
<dbReference type="EMBL" id="DQ862203">
    <property type="protein sequence ID" value="ABI18712.1"/>
    <property type="molecule type" value="Genomic_DNA"/>
</dbReference>
<dbReference type="EMBL" id="DQ862204">
    <property type="protein sequence ID" value="ABI18713.1"/>
    <property type="molecule type" value="Genomic_DNA"/>
</dbReference>
<dbReference type="EMBL" id="DQ862205">
    <property type="protein sequence ID" value="ABI18714.1"/>
    <property type="molecule type" value="Genomic_DNA"/>
</dbReference>
<dbReference type="EMBL" id="DQ862206">
    <property type="protein sequence ID" value="ABI18715.1"/>
    <property type="molecule type" value="Genomic_DNA"/>
</dbReference>
<dbReference type="EMBL" id="DQ862207">
    <property type="protein sequence ID" value="ABI18716.1"/>
    <property type="molecule type" value="Genomic_DNA"/>
</dbReference>
<dbReference type="EMBL" id="DQ862208">
    <property type="protein sequence ID" value="ABI18717.1"/>
    <property type="molecule type" value="Genomic_DNA"/>
</dbReference>
<dbReference type="EMBL" id="DQ862209">
    <property type="protein sequence ID" value="ABI18718.1"/>
    <property type="molecule type" value="Genomic_DNA"/>
</dbReference>
<dbReference type="EMBL" id="DQ862210">
    <property type="protein sequence ID" value="ABI18719.1"/>
    <property type="molecule type" value="Genomic_DNA"/>
</dbReference>
<dbReference type="EMBL" id="DQ862211">
    <property type="protein sequence ID" value="ABI18720.1"/>
    <property type="molecule type" value="Genomic_DNA"/>
</dbReference>
<dbReference type="EMBL" id="DQ862212">
    <property type="protein sequence ID" value="ABI18721.1"/>
    <property type="molecule type" value="Genomic_DNA"/>
</dbReference>
<dbReference type="EMBL" id="DQ862213">
    <property type="protein sequence ID" value="ABI18722.1"/>
    <property type="molecule type" value="Genomic_DNA"/>
</dbReference>
<dbReference type="ExpressionAtlas" id="Q9M4E3">
    <property type="expression patterns" value="baseline"/>
</dbReference>
<dbReference type="GO" id="GO:0005576">
    <property type="term" value="C:extracellular region"/>
    <property type="evidence" value="ECO:0007669"/>
    <property type="project" value="UniProtKB-SubCell"/>
</dbReference>
<dbReference type="GO" id="GO:0016020">
    <property type="term" value="C:membrane"/>
    <property type="evidence" value="ECO:0007669"/>
    <property type="project" value="UniProtKB-SubCell"/>
</dbReference>
<dbReference type="GO" id="GO:0045735">
    <property type="term" value="F:nutrient reservoir activity"/>
    <property type="evidence" value="ECO:0007669"/>
    <property type="project" value="InterPro"/>
</dbReference>
<dbReference type="GO" id="GO:0090729">
    <property type="term" value="F:toxin activity"/>
    <property type="evidence" value="ECO:0007669"/>
    <property type="project" value="UniProtKB-KW"/>
</dbReference>
<dbReference type="GO" id="GO:0042742">
    <property type="term" value="P:defense response to bacterium"/>
    <property type="evidence" value="ECO:0007669"/>
    <property type="project" value="UniProtKB-KW"/>
</dbReference>
<dbReference type="CDD" id="cd00261">
    <property type="entry name" value="AAI_SS"/>
    <property type="match status" value="1"/>
</dbReference>
<dbReference type="Gene3D" id="1.10.110.10">
    <property type="entry name" value="Plant lipid-transfer and hydrophobic proteins"/>
    <property type="match status" value="1"/>
</dbReference>
<dbReference type="InterPro" id="IPR036312">
    <property type="entry name" value="Bifun_inhib/LTP/seed_sf"/>
</dbReference>
<dbReference type="InterPro" id="IPR016140">
    <property type="entry name" value="Bifunc_inhib/LTP/seed_store"/>
</dbReference>
<dbReference type="InterPro" id="IPR001954">
    <property type="entry name" value="Glia_glutenin"/>
</dbReference>
<dbReference type="PANTHER" id="PTHR33454">
    <property type="entry name" value="PROLAMIN PPROL 14P"/>
    <property type="match status" value="1"/>
</dbReference>
<dbReference type="PANTHER" id="PTHR33454:SF5">
    <property type="entry name" value="PUROINDOLINE-A"/>
    <property type="match status" value="1"/>
</dbReference>
<dbReference type="Pfam" id="PF00234">
    <property type="entry name" value="Tryp_alpha_amyl"/>
    <property type="match status" value="1"/>
</dbReference>
<dbReference type="SMART" id="SM00499">
    <property type="entry name" value="AAI"/>
    <property type="match status" value="1"/>
</dbReference>
<dbReference type="SUPFAM" id="SSF47699">
    <property type="entry name" value="Bifunctional inhibitor/lipid-transfer protein/seed storage 2S albumin"/>
    <property type="match status" value="1"/>
</dbReference>
<gene>
    <name type="primary">HINA</name>
    <name type="synonym">HORDOA</name>
</gene>
<keyword id="KW-0044">Antibiotic</keyword>
<keyword id="KW-0929">Antimicrobial</keyword>
<keyword id="KW-1015">Disulfide bond</keyword>
<keyword id="KW-0472">Membrane</keyword>
<keyword id="KW-0611">Plant defense</keyword>
<keyword id="KW-0964">Secreted</keyword>
<keyword id="KW-0732">Signal</keyword>
<keyword id="KW-0800">Toxin</keyword>
<organism>
    <name type="scientific">Hordeum vulgare</name>
    <name type="common">Barley</name>
    <dbReference type="NCBI Taxonomy" id="4513"/>
    <lineage>
        <taxon>Eukaryota</taxon>
        <taxon>Viridiplantae</taxon>
        <taxon>Streptophyta</taxon>
        <taxon>Embryophyta</taxon>
        <taxon>Tracheophyta</taxon>
        <taxon>Spermatophyta</taxon>
        <taxon>Magnoliopsida</taxon>
        <taxon>Liliopsida</taxon>
        <taxon>Poales</taxon>
        <taxon>Poaceae</taxon>
        <taxon>BOP clade</taxon>
        <taxon>Pooideae</taxon>
        <taxon>Triticodae</taxon>
        <taxon>Triticeae</taxon>
        <taxon>Hordeinae</taxon>
        <taxon>Hordeum</taxon>
    </lineage>
</organism>